<reference key="1">
    <citation type="journal article" date="1996" name="DNA Seq.">
        <title>Characterization of cDNA encoding for phosphoglucose isomerase of rice (Oryza sativa L.).</title>
        <authorList>
            <person name="Nozue F."/>
            <person name="Umeda M."/>
            <person name="Nagamura Y."/>
            <person name="Minobe Y."/>
            <person name="Uchimiya H."/>
        </authorList>
    </citation>
    <scope>NUCLEOTIDE SEQUENCE [MRNA]</scope>
    <scope>FUNCTION</scope>
    <scope>CATALYTIC ACTIVITY</scope>
    <scope>SUBCELLULAR LOCATION</scope>
</reference>
<reference key="2">
    <citation type="journal article" date="2005" name="Genome Res.">
        <title>Sequence, annotation, and analysis of synteny between rice chromosome 3 and diverged grass species.</title>
        <authorList>
            <consortium name="The rice chromosome 3 sequencing consortium"/>
            <person name="Buell C.R."/>
            <person name="Yuan Q."/>
            <person name="Ouyang S."/>
            <person name="Liu J."/>
            <person name="Zhu W."/>
            <person name="Wang A."/>
            <person name="Maiti R."/>
            <person name="Haas B."/>
            <person name="Wortman J."/>
            <person name="Pertea M."/>
            <person name="Jones K.M."/>
            <person name="Kim M."/>
            <person name="Overton L."/>
            <person name="Tsitrin T."/>
            <person name="Fadrosh D."/>
            <person name="Bera J."/>
            <person name="Weaver B."/>
            <person name="Jin S."/>
            <person name="Johri S."/>
            <person name="Reardon M."/>
            <person name="Webb K."/>
            <person name="Hill J."/>
            <person name="Moffat K."/>
            <person name="Tallon L."/>
            <person name="Van Aken S."/>
            <person name="Lewis M."/>
            <person name="Utterback T."/>
            <person name="Feldblyum T."/>
            <person name="Zismann V."/>
            <person name="Iobst S."/>
            <person name="Hsiao J."/>
            <person name="de Vazeille A.R."/>
            <person name="Salzberg S.L."/>
            <person name="White O."/>
            <person name="Fraser C.M."/>
            <person name="Yu Y."/>
            <person name="Kim H."/>
            <person name="Rambo T."/>
            <person name="Currie J."/>
            <person name="Collura K."/>
            <person name="Kernodle-Thompson S."/>
            <person name="Wei F."/>
            <person name="Kudrna K."/>
            <person name="Ammiraju J.S.S."/>
            <person name="Luo M."/>
            <person name="Goicoechea J.L."/>
            <person name="Wing R.A."/>
            <person name="Henry D."/>
            <person name="Oates R."/>
            <person name="Palmer M."/>
            <person name="Pries G."/>
            <person name="Saski C."/>
            <person name="Simmons J."/>
            <person name="Soderlund C."/>
            <person name="Nelson W."/>
            <person name="de la Bastide M."/>
            <person name="Spiegel L."/>
            <person name="Nascimento L."/>
            <person name="Huang E."/>
            <person name="Preston R."/>
            <person name="Zutavern T."/>
            <person name="Palmer L."/>
            <person name="O'Shaughnessy A."/>
            <person name="Dike S."/>
            <person name="McCombie W.R."/>
            <person name="Minx P."/>
            <person name="Cordum H."/>
            <person name="Wilson R."/>
            <person name="Jin W."/>
            <person name="Lee H.R."/>
            <person name="Jiang J."/>
            <person name="Jackson S."/>
        </authorList>
    </citation>
    <scope>NUCLEOTIDE SEQUENCE [LARGE SCALE GENOMIC DNA]</scope>
    <source>
        <strain>cv. Nipponbare</strain>
    </source>
</reference>
<reference key="3">
    <citation type="journal article" date="2005" name="Nature">
        <title>The map-based sequence of the rice genome.</title>
        <authorList>
            <consortium name="International rice genome sequencing project (IRGSP)"/>
        </authorList>
    </citation>
    <scope>NUCLEOTIDE SEQUENCE [LARGE SCALE GENOMIC DNA]</scope>
    <source>
        <strain>cv. Nipponbare</strain>
    </source>
</reference>
<reference key="4">
    <citation type="journal article" date="2008" name="Nucleic Acids Res.">
        <title>The rice annotation project database (RAP-DB): 2008 update.</title>
        <authorList>
            <consortium name="The rice annotation project (RAP)"/>
        </authorList>
    </citation>
    <scope>GENOME REANNOTATION</scope>
    <source>
        <strain>cv. Nipponbare</strain>
    </source>
</reference>
<reference key="5">
    <citation type="journal article" date="2013" name="Rice">
        <title>Improvement of the Oryza sativa Nipponbare reference genome using next generation sequence and optical map data.</title>
        <authorList>
            <person name="Kawahara Y."/>
            <person name="de la Bastide M."/>
            <person name="Hamilton J.P."/>
            <person name="Kanamori H."/>
            <person name="McCombie W.R."/>
            <person name="Ouyang S."/>
            <person name="Schwartz D.C."/>
            <person name="Tanaka T."/>
            <person name="Wu J."/>
            <person name="Zhou S."/>
            <person name="Childs K.L."/>
            <person name="Davidson R.M."/>
            <person name="Lin H."/>
            <person name="Quesada-Ocampo L."/>
            <person name="Vaillancourt B."/>
            <person name="Sakai H."/>
            <person name="Lee S.S."/>
            <person name="Kim J."/>
            <person name="Numa H."/>
            <person name="Itoh T."/>
            <person name="Buell C.R."/>
            <person name="Matsumoto T."/>
        </authorList>
    </citation>
    <scope>GENOME REANNOTATION</scope>
    <source>
        <strain>cv. Nipponbare</strain>
    </source>
</reference>
<reference key="6">
    <citation type="journal article" date="2005" name="PLoS Biol.">
        <title>The genomes of Oryza sativa: a history of duplications.</title>
        <authorList>
            <person name="Yu J."/>
            <person name="Wang J."/>
            <person name="Lin W."/>
            <person name="Li S."/>
            <person name="Li H."/>
            <person name="Zhou J."/>
            <person name="Ni P."/>
            <person name="Dong W."/>
            <person name="Hu S."/>
            <person name="Zeng C."/>
            <person name="Zhang J."/>
            <person name="Zhang Y."/>
            <person name="Li R."/>
            <person name="Xu Z."/>
            <person name="Li S."/>
            <person name="Li X."/>
            <person name="Zheng H."/>
            <person name="Cong L."/>
            <person name="Lin L."/>
            <person name="Yin J."/>
            <person name="Geng J."/>
            <person name="Li G."/>
            <person name="Shi J."/>
            <person name="Liu J."/>
            <person name="Lv H."/>
            <person name="Li J."/>
            <person name="Wang J."/>
            <person name="Deng Y."/>
            <person name="Ran L."/>
            <person name="Shi X."/>
            <person name="Wang X."/>
            <person name="Wu Q."/>
            <person name="Li C."/>
            <person name="Ren X."/>
            <person name="Wang J."/>
            <person name="Wang X."/>
            <person name="Li D."/>
            <person name="Liu D."/>
            <person name="Zhang X."/>
            <person name="Ji Z."/>
            <person name="Zhao W."/>
            <person name="Sun Y."/>
            <person name="Zhang Z."/>
            <person name="Bao J."/>
            <person name="Han Y."/>
            <person name="Dong L."/>
            <person name="Ji J."/>
            <person name="Chen P."/>
            <person name="Wu S."/>
            <person name="Liu J."/>
            <person name="Xiao Y."/>
            <person name="Bu D."/>
            <person name="Tan J."/>
            <person name="Yang L."/>
            <person name="Ye C."/>
            <person name="Zhang J."/>
            <person name="Xu J."/>
            <person name="Zhou Y."/>
            <person name="Yu Y."/>
            <person name="Zhang B."/>
            <person name="Zhuang S."/>
            <person name="Wei H."/>
            <person name="Liu B."/>
            <person name="Lei M."/>
            <person name="Yu H."/>
            <person name="Li Y."/>
            <person name="Xu H."/>
            <person name="Wei S."/>
            <person name="He X."/>
            <person name="Fang L."/>
            <person name="Zhang Z."/>
            <person name="Zhang Y."/>
            <person name="Huang X."/>
            <person name="Su Z."/>
            <person name="Tong W."/>
            <person name="Li J."/>
            <person name="Tong Z."/>
            <person name="Li S."/>
            <person name="Ye J."/>
            <person name="Wang L."/>
            <person name="Fang L."/>
            <person name="Lei T."/>
            <person name="Chen C.-S."/>
            <person name="Chen H.-C."/>
            <person name="Xu Z."/>
            <person name="Li H."/>
            <person name="Huang H."/>
            <person name="Zhang F."/>
            <person name="Xu H."/>
            <person name="Li N."/>
            <person name="Zhao C."/>
            <person name="Li S."/>
            <person name="Dong L."/>
            <person name="Huang Y."/>
            <person name="Li L."/>
            <person name="Xi Y."/>
            <person name="Qi Q."/>
            <person name="Li W."/>
            <person name="Zhang B."/>
            <person name="Hu W."/>
            <person name="Zhang Y."/>
            <person name="Tian X."/>
            <person name="Jiao Y."/>
            <person name="Liang X."/>
            <person name="Jin J."/>
            <person name="Gao L."/>
            <person name="Zheng W."/>
            <person name="Hao B."/>
            <person name="Liu S.-M."/>
            <person name="Wang W."/>
            <person name="Yuan L."/>
            <person name="Cao M."/>
            <person name="McDermott J."/>
            <person name="Samudrala R."/>
            <person name="Wang J."/>
            <person name="Wong G.K.-S."/>
            <person name="Yang H."/>
        </authorList>
    </citation>
    <scope>NUCLEOTIDE SEQUENCE [LARGE SCALE GENOMIC DNA]</scope>
    <source>
        <strain>cv. Nipponbare</strain>
    </source>
</reference>
<comment type="function">
    <text evidence="5">Catalyzes the conversion of glucose-6-phosphate to fructose-6-phosphate, the second step in glycolysis, and the reverse reaction during gluconeogenesis.</text>
</comment>
<comment type="catalytic activity">
    <reaction evidence="2">
        <text>alpha-D-glucose 6-phosphate = beta-D-fructose 6-phosphate</text>
        <dbReference type="Rhea" id="RHEA:11816"/>
        <dbReference type="ChEBI" id="CHEBI:57634"/>
        <dbReference type="ChEBI" id="CHEBI:58225"/>
        <dbReference type="EC" id="5.3.1.9"/>
    </reaction>
</comment>
<comment type="pathway">
    <text evidence="4">Carbohydrate degradation; glycolysis; D-glyceraldehyde 3-phosphate and glycerone phosphate from D-glucose: step 2/4.</text>
</comment>
<comment type="subunit">
    <text evidence="1">Homodimer.</text>
</comment>
<comment type="subcellular location">
    <subcellularLocation>
        <location evidence="5">Cytoplasm</location>
    </subcellularLocation>
</comment>
<comment type="similarity">
    <text evidence="4">Belongs to the GPI family.</text>
</comment>
<protein>
    <recommendedName>
        <fullName evidence="4">Glucose-6-phosphate isomerase, cytosolic A</fullName>
        <shortName evidence="4">GPI-A</shortName>
        <ecNumber evidence="2">5.3.1.9</ecNumber>
    </recommendedName>
    <alternativeName>
        <fullName evidence="3">Phosphoglucose isomerase A</fullName>
        <shortName evidence="3">PGI-A</shortName>
    </alternativeName>
    <alternativeName>
        <fullName evidence="4">Phosphohexose isomerase A</fullName>
        <shortName evidence="4">PHI-A</shortName>
    </alternativeName>
</protein>
<dbReference type="EC" id="5.3.1.9" evidence="2"/>
<dbReference type="EMBL" id="D45217">
    <property type="protein sequence ID" value="BAA08148.1"/>
    <property type="molecule type" value="mRNA"/>
</dbReference>
<dbReference type="EMBL" id="AC091494">
    <property type="protein sequence ID" value="AAN65024.1"/>
    <property type="molecule type" value="Genomic_DNA"/>
</dbReference>
<dbReference type="EMBL" id="DP000009">
    <property type="protein sequence ID" value="ABF99131.1"/>
    <property type="molecule type" value="Genomic_DNA"/>
</dbReference>
<dbReference type="EMBL" id="DP000009">
    <property type="protein sequence ID" value="ABF99132.1"/>
    <property type="molecule type" value="Genomic_DNA"/>
</dbReference>
<dbReference type="EMBL" id="AP008209">
    <property type="protein sequence ID" value="BAF13348.1"/>
    <property type="molecule type" value="Genomic_DNA"/>
</dbReference>
<dbReference type="EMBL" id="AP014959">
    <property type="protein sequence ID" value="BAS86635.1"/>
    <property type="molecule type" value="Genomic_DNA"/>
</dbReference>
<dbReference type="EMBL" id="CM000140">
    <property type="protein sequence ID" value="EEE60024.1"/>
    <property type="molecule type" value="Genomic_DNA"/>
</dbReference>
<dbReference type="PIR" id="T03948">
    <property type="entry name" value="T03948"/>
</dbReference>
<dbReference type="RefSeq" id="XP_015632584.1">
    <property type="nucleotide sequence ID" value="XM_015777098.1"/>
</dbReference>
<dbReference type="RefSeq" id="XP_015632585.1">
    <property type="nucleotide sequence ID" value="XM_015777099.1"/>
</dbReference>
<dbReference type="SMR" id="P42862"/>
<dbReference type="FunCoup" id="P42862">
    <property type="interactions" value="2818"/>
</dbReference>
<dbReference type="STRING" id="39947.P42862"/>
<dbReference type="iPTMnet" id="P42862"/>
<dbReference type="PaxDb" id="39947-P42862"/>
<dbReference type="EnsemblPlants" id="Os03t0776000-01">
    <property type="protein sequence ID" value="Os03t0776000-01"/>
    <property type="gene ID" value="Os03g0776000"/>
</dbReference>
<dbReference type="Gramene" id="Os03t0776000-01">
    <property type="protein sequence ID" value="Os03t0776000-01"/>
    <property type="gene ID" value="Os03g0776000"/>
</dbReference>
<dbReference type="KEGG" id="dosa:Os03g0776000"/>
<dbReference type="eggNOG" id="KOG2446">
    <property type="taxonomic scope" value="Eukaryota"/>
</dbReference>
<dbReference type="HOGENOM" id="CLU_017947_4_0_1"/>
<dbReference type="InParanoid" id="P42862"/>
<dbReference type="OMA" id="MHDVERC"/>
<dbReference type="OrthoDB" id="5831190at2759"/>
<dbReference type="PlantReactome" id="R-OSA-1119410">
    <property type="pathway name" value="Ascorbate biosynthesis"/>
</dbReference>
<dbReference type="PlantReactome" id="R-OSA-1119477">
    <property type="pathway name" value="Starch biosynthesis"/>
</dbReference>
<dbReference type="PlantReactome" id="R-OSA-1119570">
    <property type="pathway name" value="Cytosolic glycolysis"/>
</dbReference>
<dbReference type="UniPathway" id="UPA00109">
    <property type="reaction ID" value="UER00181"/>
</dbReference>
<dbReference type="Proteomes" id="UP000000763">
    <property type="component" value="Chromosome 3"/>
</dbReference>
<dbReference type="Proteomes" id="UP000007752">
    <property type="component" value="Chromosome 3"/>
</dbReference>
<dbReference type="Proteomes" id="UP000059680">
    <property type="component" value="Chromosome 3"/>
</dbReference>
<dbReference type="GO" id="GO:0005829">
    <property type="term" value="C:cytosol"/>
    <property type="evidence" value="ECO:0000314"/>
    <property type="project" value="Gramene"/>
</dbReference>
<dbReference type="GO" id="GO:0097367">
    <property type="term" value="F:carbohydrate derivative binding"/>
    <property type="evidence" value="ECO:0007669"/>
    <property type="project" value="InterPro"/>
</dbReference>
<dbReference type="GO" id="GO:0004347">
    <property type="term" value="F:glucose-6-phosphate isomerase activity"/>
    <property type="evidence" value="ECO:0000314"/>
    <property type="project" value="Gramene"/>
</dbReference>
<dbReference type="GO" id="GO:0016853">
    <property type="term" value="F:isomerase activity"/>
    <property type="evidence" value="ECO:0000314"/>
    <property type="project" value="Gramene"/>
</dbReference>
<dbReference type="GO" id="GO:0048029">
    <property type="term" value="F:monosaccharide binding"/>
    <property type="evidence" value="ECO:0000318"/>
    <property type="project" value="GO_Central"/>
</dbReference>
<dbReference type="GO" id="GO:0006094">
    <property type="term" value="P:gluconeogenesis"/>
    <property type="evidence" value="ECO:0000314"/>
    <property type="project" value="Gramene"/>
</dbReference>
<dbReference type="GO" id="GO:0051156">
    <property type="term" value="P:glucose 6-phosphate metabolic process"/>
    <property type="evidence" value="ECO:0000318"/>
    <property type="project" value="GO_Central"/>
</dbReference>
<dbReference type="GO" id="GO:0006096">
    <property type="term" value="P:glycolytic process"/>
    <property type="evidence" value="ECO:0000314"/>
    <property type="project" value="Gramene"/>
</dbReference>
<dbReference type="CDD" id="cd05015">
    <property type="entry name" value="SIS_PGI_1"/>
    <property type="match status" value="1"/>
</dbReference>
<dbReference type="CDD" id="cd05016">
    <property type="entry name" value="SIS_PGI_2"/>
    <property type="match status" value="1"/>
</dbReference>
<dbReference type="FunFam" id="1.10.1390.10:FF:000002">
    <property type="entry name" value="Glucose-6-phosphate isomerase"/>
    <property type="match status" value="1"/>
</dbReference>
<dbReference type="FunFam" id="3.40.50.10490:FF:000018">
    <property type="entry name" value="Glucose-6-phosphate isomerase"/>
    <property type="match status" value="1"/>
</dbReference>
<dbReference type="FunFam" id="3.40.50.10490:FF:000031">
    <property type="entry name" value="Glucose-6-phosphate isomerase"/>
    <property type="match status" value="1"/>
</dbReference>
<dbReference type="FunFam" id="3.40.50.10490:FF:000048">
    <property type="entry name" value="Glucose-6-phosphate isomerase"/>
    <property type="match status" value="1"/>
</dbReference>
<dbReference type="Gene3D" id="1.10.1390.10">
    <property type="match status" value="1"/>
</dbReference>
<dbReference type="Gene3D" id="3.40.50.10490">
    <property type="entry name" value="Glucose-6-phosphate isomerase like protein, domain 1"/>
    <property type="match status" value="2"/>
</dbReference>
<dbReference type="HAMAP" id="MF_00473">
    <property type="entry name" value="G6P_isomerase"/>
    <property type="match status" value="1"/>
</dbReference>
<dbReference type="InterPro" id="IPR001672">
    <property type="entry name" value="G6P_Isomerase"/>
</dbReference>
<dbReference type="InterPro" id="IPR023096">
    <property type="entry name" value="G6P_Isomerase_C"/>
</dbReference>
<dbReference type="InterPro" id="IPR018189">
    <property type="entry name" value="Phosphoglucose_isomerase_CS"/>
</dbReference>
<dbReference type="InterPro" id="IPR046348">
    <property type="entry name" value="SIS_dom_sf"/>
</dbReference>
<dbReference type="InterPro" id="IPR035476">
    <property type="entry name" value="SIS_PGI_1"/>
</dbReference>
<dbReference type="InterPro" id="IPR035482">
    <property type="entry name" value="SIS_PGI_2"/>
</dbReference>
<dbReference type="NCBIfam" id="NF001211">
    <property type="entry name" value="PRK00179.1"/>
    <property type="match status" value="1"/>
</dbReference>
<dbReference type="PANTHER" id="PTHR11469">
    <property type="entry name" value="GLUCOSE-6-PHOSPHATE ISOMERASE"/>
    <property type="match status" value="1"/>
</dbReference>
<dbReference type="PANTHER" id="PTHR11469:SF1">
    <property type="entry name" value="GLUCOSE-6-PHOSPHATE ISOMERASE"/>
    <property type="match status" value="1"/>
</dbReference>
<dbReference type="Pfam" id="PF00342">
    <property type="entry name" value="PGI"/>
    <property type="match status" value="1"/>
</dbReference>
<dbReference type="PRINTS" id="PR00662">
    <property type="entry name" value="G6PISOMERASE"/>
</dbReference>
<dbReference type="SUPFAM" id="SSF53697">
    <property type="entry name" value="SIS domain"/>
    <property type="match status" value="1"/>
</dbReference>
<dbReference type="PROSITE" id="PS00765">
    <property type="entry name" value="P_GLUCOSE_ISOMERASE_1"/>
    <property type="match status" value="1"/>
</dbReference>
<dbReference type="PROSITE" id="PS00174">
    <property type="entry name" value="P_GLUCOSE_ISOMERASE_2"/>
    <property type="match status" value="1"/>
</dbReference>
<dbReference type="PROSITE" id="PS51463">
    <property type="entry name" value="P_GLUCOSE_ISOMERASE_3"/>
    <property type="match status" value="1"/>
</dbReference>
<name>G6PIA_ORYSJ</name>
<proteinExistence type="evidence at protein level"/>
<sequence>MASSALICDTEQWKGLQAHVGEIQKTHLRHLMHDVERCKAMTAEYEGIYLDYSRQRATGETMEKLFKLAEAAKLKEKIEKMFRGDKINSTENRSVLHVALRAPRDEVINSNGVNVVPEVWGVKDKIKQFSETFRSGSWVGATGKALTNVVSVGIGGSFLGPLFVHAALQTDPEAAESAKGRQLRFLANVDPVDVARSIKDLDPETTLVVVVSKTFTTAETMLNARTLKEWIVSSLGPDAVAKHMIAVSTNLELVEKFGIDPKNAFAFWDWVGGRYSVCSAVGVLPLSLQYGFPIVQKFLEGAASIDKHFRSSSFEKNIPVLLGLLSVWNVSFLGYPARAILPYSQALEKFAPHIQQLSMESNGKGVSIDGVQLPFESGEIDFGEPGTNGQHSFYQLIHQGRVIPCDFIGVVKSQQPVYLKGEIVSNHDELMSNFFAQPDALAYGKTPEQLHSEKVPEHLIPHKTFQGNRPSLSLLLPSLSAYEIGQLLAIYEHRIAVQGFLWGINSFDQWGVELGKSLASQVRKSLHASRVEGKPVLGFNSSTTSLLTRYLAVEPSTPYNTTTLPKV</sequence>
<feature type="chain" id="PRO_0000180566" description="Glucose-6-phosphate isomerase, cytosolic A">
    <location>
        <begin position="1"/>
        <end position="567"/>
    </location>
</feature>
<feature type="active site" description="Proton donor" evidence="1">
    <location>
        <position position="360"/>
    </location>
</feature>
<feature type="active site" evidence="1">
    <location>
        <position position="391"/>
    </location>
</feature>
<feature type="active site" evidence="1">
    <location>
        <position position="516"/>
    </location>
</feature>
<feature type="binding site" evidence="1">
    <location>
        <begin position="156"/>
        <end position="157"/>
    </location>
    <ligand>
        <name>D-glucose 6-phosphate</name>
        <dbReference type="ChEBI" id="CHEBI:61548"/>
    </ligand>
</feature>
<feature type="binding site" evidence="1">
    <location>
        <begin position="212"/>
        <end position="217"/>
    </location>
    <ligand>
        <name>D-glucose 6-phosphate</name>
        <dbReference type="ChEBI" id="CHEBI:61548"/>
    </ligand>
</feature>
<feature type="binding site" evidence="1">
    <location>
        <position position="356"/>
    </location>
    <ligand>
        <name>D-glucose 6-phosphate</name>
        <dbReference type="ChEBI" id="CHEBI:61548"/>
    </ligand>
</feature>
<feature type="binding site" evidence="1">
    <location>
        <position position="360"/>
    </location>
    <ligand>
        <name>D-glucose 6-phosphate</name>
        <dbReference type="ChEBI" id="CHEBI:61548"/>
    </ligand>
</feature>
<feature type="binding site" evidence="1">
    <location>
        <position position="391"/>
    </location>
    <ligand>
        <name>D-glucose 6-phosphate</name>
        <dbReference type="ChEBI" id="CHEBI:61548"/>
    </ligand>
</feature>
<feature type="binding site" evidence="1">
    <location>
        <position position="516"/>
    </location>
    <ligand>
        <name>D-glucose 6-phosphate</name>
        <dbReference type="ChEBI" id="CHEBI:61548"/>
    </ligand>
</feature>
<feature type="sequence conflict" description="In Ref. 1; BAA08148." evidence="4" ref="1">
    <original>P</original>
    <variation>S</variation>
    <location>
        <position position="374"/>
    </location>
</feature>
<feature type="sequence conflict" description="In Ref. 1; BAA08148." evidence="4" ref="1">
    <original>S</original>
    <variation>T</variation>
    <location>
        <position position="377"/>
    </location>
</feature>
<gene>
    <name evidence="8" type="ordered locus">Os03g0776000</name>
    <name evidence="7" type="ordered locus">LOC_Os03g56460</name>
    <name evidence="9" type="ORF">OsJ_12779</name>
    <name evidence="6" type="ORF">OSJNBa0070N04.5</name>
</gene>
<evidence type="ECO:0000250" key="1">
    <source>
        <dbReference type="UniProtKB" id="P06745"/>
    </source>
</evidence>
<evidence type="ECO:0000269" key="2">
    <source>
    </source>
</evidence>
<evidence type="ECO:0000303" key="3">
    <source>
    </source>
</evidence>
<evidence type="ECO:0000305" key="4"/>
<evidence type="ECO:0000305" key="5">
    <source>
    </source>
</evidence>
<evidence type="ECO:0000312" key="6">
    <source>
        <dbReference type="EMBL" id="AAN65024.1"/>
    </source>
</evidence>
<evidence type="ECO:0000312" key="7">
    <source>
        <dbReference type="EMBL" id="ABF99132.1"/>
    </source>
</evidence>
<evidence type="ECO:0000312" key="8">
    <source>
        <dbReference type="EMBL" id="BAF13348.1"/>
    </source>
</evidence>
<evidence type="ECO:0000312" key="9">
    <source>
        <dbReference type="EMBL" id="EEE60024.1"/>
    </source>
</evidence>
<organism>
    <name type="scientific">Oryza sativa subsp. japonica</name>
    <name type="common">Rice</name>
    <dbReference type="NCBI Taxonomy" id="39947"/>
    <lineage>
        <taxon>Eukaryota</taxon>
        <taxon>Viridiplantae</taxon>
        <taxon>Streptophyta</taxon>
        <taxon>Embryophyta</taxon>
        <taxon>Tracheophyta</taxon>
        <taxon>Spermatophyta</taxon>
        <taxon>Magnoliopsida</taxon>
        <taxon>Liliopsida</taxon>
        <taxon>Poales</taxon>
        <taxon>Poaceae</taxon>
        <taxon>BOP clade</taxon>
        <taxon>Oryzoideae</taxon>
        <taxon>Oryzeae</taxon>
        <taxon>Oryzinae</taxon>
        <taxon>Oryza</taxon>
        <taxon>Oryza sativa</taxon>
    </lineage>
</organism>
<keyword id="KW-0963">Cytoplasm</keyword>
<keyword id="KW-0312">Gluconeogenesis</keyword>
<keyword id="KW-0324">Glycolysis</keyword>
<keyword id="KW-0413">Isomerase</keyword>
<keyword id="KW-1185">Reference proteome</keyword>
<accession>P42862</accession>
<accession>A0A0P0W3M8</accession>
<accession>Q10DK3</accession>
<accession>Q8H8M6</accession>